<reference key="1">
    <citation type="submission" date="2009-06" db="EMBL/GenBank/DDBJ databases">
        <title>Complete sequence of Thermotogales bacterium TBF 19.5.1.</title>
        <authorList>
            <consortium name="US DOE Joint Genome Institute"/>
            <person name="Lucas S."/>
            <person name="Copeland A."/>
            <person name="Lapidus A."/>
            <person name="Glavina del Rio T."/>
            <person name="Tice H."/>
            <person name="Bruce D."/>
            <person name="Goodwin L."/>
            <person name="Pitluck S."/>
            <person name="Chertkov O."/>
            <person name="Brettin T."/>
            <person name="Detter J.C."/>
            <person name="Han C."/>
            <person name="Schmutz J."/>
            <person name="Larimer F."/>
            <person name="Land M."/>
            <person name="Hauser L."/>
            <person name="Kyrpides N."/>
            <person name="Ovchinnikova G."/>
            <person name="Noll K."/>
        </authorList>
    </citation>
    <scope>NUCLEOTIDE SEQUENCE [LARGE SCALE GENOMIC DNA]</scope>
    <source>
        <strain>ATCC BAA-1733 / DSM 21960 / TBF 19.5.1</strain>
    </source>
</reference>
<keyword id="KW-1185">Reference proteome</keyword>
<keyword id="KW-0687">Ribonucleoprotein</keyword>
<keyword id="KW-0689">Ribosomal protein</keyword>
<sequence length="60" mass="6870">MAVPKQKRSRSRTHHKRVKIYRPIKVAVSVCPNCGEPKEPHRVCLHCGYYGGKQILEIGE</sequence>
<accession>C5CEP5</accession>
<protein>
    <recommendedName>
        <fullName evidence="1">Large ribosomal subunit protein bL32</fullName>
    </recommendedName>
    <alternativeName>
        <fullName evidence="2">50S ribosomal protein L32</fullName>
    </alternativeName>
</protein>
<proteinExistence type="inferred from homology"/>
<organism>
    <name type="scientific">Kosmotoga olearia (strain ATCC BAA-1733 / DSM 21960 / TBF 19.5.1)</name>
    <dbReference type="NCBI Taxonomy" id="521045"/>
    <lineage>
        <taxon>Bacteria</taxon>
        <taxon>Thermotogati</taxon>
        <taxon>Thermotogota</taxon>
        <taxon>Thermotogae</taxon>
        <taxon>Kosmotogales</taxon>
        <taxon>Kosmotogaceae</taxon>
        <taxon>Kosmotoga</taxon>
    </lineage>
</organism>
<comment type="similarity">
    <text evidence="1">Belongs to the bacterial ribosomal protein bL32 family.</text>
</comment>
<gene>
    <name evidence="1" type="primary">rpmF</name>
    <name type="ordered locus">Kole_1535</name>
</gene>
<evidence type="ECO:0000255" key="1">
    <source>
        <dbReference type="HAMAP-Rule" id="MF_00340"/>
    </source>
</evidence>
<evidence type="ECO:0000305" key="2"/>
<feature type="chain" id="PRO_1000205266" description="Large ribosomal subunit protein bL32">
    <location>
        <begin position="1"/>
        <end position="60"/>
    </location>
</feature>
<name>RL32_KOSOT</name>
<dbReference type="EMBL" id="CP001634">
    <property type="protein sequence ID" value="ACR80225.1"/>
    <property type="molecule type" value="Genomic_DNA"/>
</dbReference>
<dbReference type="RefSeq" id="WP_015868870.1">
    <property type="nucleotide sequence ID" value="NC_012785.1"/>
</dbReference>
<dbReference type="SMR" id="C5CEP5"/>
<dbReference type="STRING" id="521045.Kole_1535"/>
<dbReference type="KEGG" id="kol:Kole_1535"/>
<dbReference type="eggNOG" id="COG0333">
    <property type="taxonomic scope" value="Bacteria"/>
</dbReference>
<dbReference type="HOGENOM" id="CLU_129084_1_3_0"/>
<dbReference type="OrthoDB" id="9812874at2"/>
<dbReference type="Proteomes" id="UP000002382">
    <property type="component" value="Chromosome"/>
</dbReference>
<dbReference type="GO" id="GO:0015934">
    <property type="term" value="C:large ribosomal subunit"/>
    <property type="evidence" value="ECO:0007669"/>
    <property type="project" value="InterPro"/>
</dbReference>
<dbReference type="GO" id="GO:0003735">
    <property type="term" value="F:structural constituent of ribosome"/>
    <property type="evidence" value="ECO:0007669"/>
    <property type="project" value="InterPro"/>
</dbReference>
<dbReference type="GO" id="GO:0006412">
    <property type="term" value="P:translation"/>
    <property type="evidence" value="ECO:0007669"/>
    <property type="project" value="UniProtKB-UniRule"/>
</dbReference>
<dbReference type="HAMAP" id="MF_00340">
    <property type="entry name" value="Ribosomal_bL32"/>
    <property type="match status" value="1"/>
</dbReference>
<dbReference type="InterPro" id="IPR002677">
    <property type="entry name" value="Ribosomal_bL32"/>
</dbReference>
<dbReference type="InterPro" id="IPR044957">
    <property type="entry name" value="Ribosomal_bL32_bact"/>
</dbReference>
<dbReference type="InterPro" id="IPR011332">
    <property type="entry name" value="Ribosomal_zn-bd"/>
</dbReference>
<dbReference type="NCBIfam" id="TIGR01031">
    <property type="entry name" value="rpmF_bact"/>
    <property type="match status" value="1"/>
</dbReference>
<dbReference type="PANTHER" id="PTHR35534">
    <property type="entry name" value="50S RIBOSOMAL PROTEIN L32"/>
    <property type="match status" value="1"/>
</dbReference>
<dbReference type="PANTHER" id="PTHR35534:SF1">
    <property type="entry name" value="LARGE RIBOSOMAL SUBUNIT PROTEIN BL32"/>
    <property type="match status" value="1"/>
</dbReference>
<dbReference type="Pfam" id="PF01783">
    <property type="entry name" value="Ribosomal_L32p"/>
    <property type="match status" value="1"/>
</dbReference>
<dbReference type="SUPFAM" id="SSF57829">
    <property type="entry name" value="Zn-binding ribosomal proteins"/>
    <property type="match status" value="1"/>
</dbReference>